<gene>
    <name type="ORF">v1g113221</name>
</gene>
<evidence type="ECO:0000250" key="1">
    <source>
        <dbReference type="UniProtKB" id="P19651"/>
    </source>
</evidence>
<evidence type="ECO:0000255" key="2"/>
<evidence type="ECO:0000269" key="3">
    <source>
    </source>
</evidence>
<evidence type="ECO:0000269" key="4">
    <source>
    </source>
</evidence>
<evidence type="ECO:0000269" key="5">
    <source>
    </source>
</evidence>
<evidence type="ECO:0000269" key="6">
    <source>
    </source>
</evidence>
<evidence type="ECO:0000303" key="7">
    <source>
    </source>
</evidence>
<evidence type="ECO:0000303" key="8">
    <source>
    </source>
</evidence>
<evidence type="ECO:0000305" key="9"/>
<evidence type="ECO:0000305" key="10">
    <source>
    </source>
</evidence>
<evidence type="ECO:0000312" key="11">
    <source>
        <dbReference type="EMBL" id="ABW97339.1"/>
    </source>
</evidence>
<evidence type="ECO:0000312" key="12">
    <source>
        <dbReference type="EMBL" id="ABW97344.1"/>
    </source>
</evidence>
<name>NA240_NEMVE</name>
<proteinExistence type="evidence at protein level"/>
<feature type="signal peptide" evidence="2">
    <location>
        <begin position="1"/>
        <end position="20"/>
    </location>
</feature>
<feature type="propeptide" id="PRO_0000398317" evidence="9">
    <location>
        <begin position="21"/>
        <end position="36"/>
    </location>
</feature>
<feature type="chain" id="PRO_5000319672" description="N.vectensis toxin 1 6" evidence="10">
    <location>
        <begin position="39"/>
        <end position="85"/>
    </location>
</feature>
<feature type="disulfide bond" evidence="1">
    <location>
        <begin position="42"/>
        <end position="82"/>
    </location>
</feature>
<feature type="disulfide bond" evidence="1">
    <location>
        <begin position="44"/>
        <end position="72"/>
    </location>
</feature>
<feature type="disulfide bond" evidence="1">
    <location>
        <begin position="65"/>
        <end position="83"/>
    </location>
</feature>
<feature type="splice variant" id="VSP_039750" description="In isoform 2." evidence="9">
    <original>RDMMSDDELDYHYSKRGIPCACDSDGPDIRSASLSGIVWMGSCPSGWKKCKSYYSIVADCCNQ</original>
    <variation>K</variation>
    <location>
        <begin position="23"/>
        <end position="85"/>
    </location>
</feature>
<feature type="sequence variant" description="In Nv1-9.">
    <original>V</original>
    <variation>A</variation>
    <location>
        <position position="9"/>
    </location>
</feature>
<dbReference type="EMBL" id="EU124460">
    <property type="protein sequence ID" value="ABW97339.1"/>
    <property type="molecule type" value="Genomic_DNA"/>
</dbReference>
<dbReference type="EMBL" id="EU124465">
    <property type="protein sequence ID" value="ABW97344.1"/>
    <property type="molecule type" value="Genomic_DNA"/>
</dbReference>
<dbReference type="EMBL" id="DS469622">
    <property type="protein sequence ID" value="EDO38673.1"/>
    <property type="status" value="ALT_SEQ"/>
    <property type="molecule type" value="Genomic_DNA"/>
</dbReference>
<dbReference type="RefSeq" id="XP_001630734.1">
    <property type="nucleotide sequence ID" value="XM_001630684.1"/>
</dbReference>
<dbReference type="RefSeq" id="XP_001630736.1">
    <property type="nucleotide sequence ID" value="XM_001630686.1"/>
</dbReference>
<dbReference type="SMR" id="B1NWS8"/>
<dbReference type="HOGENOM" id="CLU_2944416_0_0_1"/>
<dbReference type="InParanoid" id="B1NWS8"/>
<dbReference type="PhylomeDB" id="B1NWS8"/>
<dbReference type="Proteomes" id="UP000001593">
    <property type="component" value="Unassembled WGS sequence"/>
</dbReference>
<dbReference type="GO" id="GO:0005576">
    <property type="term" value="C:extracellular region"/>
    <property type="evidence" value="ECO:0007669"/>
    <property type="project" value="UniProtKB-SubCell"/>
</dbReference>
<dbReference type="GO" id="GO:0017080">
    <property type="term" value="F:sodium channel regulator activity"/>
    <property type="evidence" value="ECO:0007669"/>
    <property type="project" value="UniProtKB-KW"/>
</dbReference>
<dbReference type="GO" id="GO:0090729">
    <property type="term" value="F:toxin activity"/>
    <property type="evidence" value="ECO:0007669"/>
    <property type="project" value="UniProtKB-KW"/>
</dbReference>
<dbReference type="Gene3D" id="2.20.20.10">
    <property type="entry name" value="Anthopleurin-A"/>
    <property type="match status" value="1"/>
</dbReference>
<dbReference type="InterPro" id="IPR023355">
    <property type="entry name" value="Myo_ane_neurotoxin_sf"/>
</dbReference>
<dbReference type="Pfam" id="PF00706">
    <property type="entry name" value="Toxin_4"/>
    <property type="match status" value="1"/>
</dbReference>
<dbReference type="SUPFAM" id="SSF57392">
    <property type="entry name" value="Defensin-like"/>
    <property type="match status" value="1"/>
</dbReference>
<organism>
    <name type="scientific">Nematostella vectensis</name>
    <name type="common">Starlet sea anemone</name>
    <dbReference type="NCBI Taxonomy" id="45351"/>
    <lineage>
        <taxon>Eukaryota</taxon>
        <taxon>Metazoa</taxon>
        <taxon>Cnidaria</taxon>
        <taxon>Anthozoa</taxon>
        <taxon>Hexacorallia</taxon>
        <taxon>Actiniaria</taxon>
        <taxon>Edwardsiidae</taxon>
        <taxon>Nematostella</taxon>
    </lineage>
</organism>
<comment type="function">
    <text evidence="3 4 5 6">Binds to site 3 of voltage-gated sodium channels and inhibits the inactivation process (PubMed:18538344). Is highly active on DmNav1/TipE (drosophila) and is only extremely weakly active on rat Nav1.4-beta-1/SCN4A-SCN1B, and on human Nav1.5-beta-1/SCN5A-beta-1 (PubMed:18538344). This reveals high specificity for arthropod over mammalian channels (PubMed:18538344). In vivo, when released into the medium, this recombinant toxin induces impaired swimming, paralysis and death of the crustacean A.nauplii within several hours (PubMed:22048953). Also causes paralysis of cherry shrimps immediately after injection at very low doses (PubMed:29424690). Its effect on zebrafish (D.rerio) larvae is also rapid, since it induces tail twitching accompanied by impaired swimming after 20 minutes and complete paralysis within 45 minutes (PubMed:22048953). It has also been observed to cause death of zebrafish larvae within 1 hour (PubMed:31134275).</text>
</comment>
<comment type="subcellular location">
    <subcellularLocation>
        <location evidence="3">Secreted</location>
    </subcellularLocation>
</comment>
<comment type="alternative products">
    <event type="alternative splicing"/>
    <isoform>
        <id>B1NWS8-1</id>
        <name>1</name>
        <sequence type="displayed"/>
    </isoform>
    <isoform>
        <id>B1NWS8-2</id>
        <name>2</name>
        <name>truncated</name>
        <sequence type="described" ref="VSP_039750"/>
    </isoform>
    <text>Intron retention discovered for all transcripts, no experimental confirmation available for this specific sequence.</text>
</comment>
<comment type="tissue specificity">
    <text evidence="4 5">Expressed in ectodermal glands and in clumps outside of the extodermal layer (PubMed:22048953). Is not expressed in nematocytes (PubMed:22048953). In adult female tissues, shows similar expression levels in mesenteries (gametes-producing tissue), tentacles, pharynx and physa (PubMed:29424690).</text>
</comment>
<comment type="developmental stage">
    <text evidence="3 4 5 6">Is detected in unfertilized eggs (at protein level) (PubMed:29424690, PubMed:31134275). Is also detected in late planulae, primary polyps and adults (both females and males) (at protein level) (PubMed:22048953, PubMed:29424690). Nv1 is transcribed throughout the complete life cycle and is found at multiple developmental stages including unfertilized eggs, blastulae, gastrulae, early planulae, planulae, metamorphosing planulae, primary polyps, juvenile polyps (2 and 4 months old), adult males, and adult females, with highest levels in juvenile polyps and adults (PubMed:18538344, PubMed:29424690). Importantly, Nv1 transcripts are not spliced in the embryo and planula due to intron retention and therefore Nv1 can be considered purely an adult toxin (PubMed:18538344).</text>
</comment>
<comment type="toxic dose">
    <text evidence="3">PD(50) is 76 nmol/kg into blowfly larvae.</text>
</comment>
<comment type="miscellaneous">
    <text>Nv1 toxin seems to be encoded by 8 different genes. 4 of them code for identical precursors, whereas 4 others code for very similar precursors. In the genome draft, 6 additional loci are also correlated to Nv1 toxin, but they are not predicted to be functional genes. This high similarity may be explained by concerted evolution.</text>
</comment>
<comment type="miscellaneous">
    <text evidence="9">The primary structure of the mature peptide is identical in 9 entries (AC B1NWS4, AC B1NWS1, AC B1NWR6, AC P0CH90, AC P0CH46, AC B1NWS8, AC A7SCE5, AC B1NWR7 and AC P0CH45). Additional information can be found in entry AC B1NWS4.</text>
</comment>
<comment type="miscellaneous">
    <molecule>Isoform 2</molecule>
    <text evidence="9">Due to an intron retention observed only in early life stages (embryo and planula).</text>
</comment>
<comment type="miscellaneous">
    <text evidence="3">Negative results: has no activity on the rat brain channel Nav1.2a-beta-1/SCN2A-SCN1B.</text>
</comment>
<comment type="similarity">
    <text evidence="9">Belongs to the sea anemone sodium channel inhibitory toxin family. Type II subfamily.</text>
</comment>
<comment type="sequence caution" evidence="9">
    <conflict type="erroneous gene model prediction">
        <sequence resource="EMBL-CDS" id="EDO38673"/>
    </conflict>
</comment>
<reference key="1">
    <citation type="journal article" date="2008" name="Mol. Biol. Evol.">
        <title>Concerted evolution of sea anemone neurotoxin genes is revealed through analysis of the Nematostella vectensis genome.</title>
        <authorList>
            <person name="Moran Y."/>
            <person name="Weinberger H."/>
            <person name="Sullivan J.C."/>
            <person name="Reitzel A.M."/>
            <person name="Finnerty J.R."/>
            <person name="Gurevitz M."/>
        </authorList>
    </citation>
    <scope>NUCLEOTIDE SEQUENCE [GENOMIC DNA]</scope>
    <source>
        <strain>Crane Marsh</strain>
        <strain>Neponset River Marsh</strain>
        <strain>Rhode River</strain>
    </source>
</reference>
<reference key="2">
    <citation type="journal article" date="2007" name="Science">
        <title>Sea anemone genome reveals ancestral eumetazoan gene repertoire and genomic organization.</title>
        <authorList>
            <person name="Putnam N.H."/>
            <person name="Srivastava M."/>
            <person name="Hellsten U."/>
            <person name="Dirks B."/>
            <person name="Chapman J."/>
            <person name="Salamov A."/>
            <person name="Terry A."/>
            <person name="Shapiro H."/>
            <person name="Lindquist E."/>
            <person name="Kapitonov V.V."/>
            <person name="Jurka J."/>
            <person name="Genikhovich G."/>
            <person name="Grigoriev I.V."/>
            <person name="Lucas S.M."/>
            <person name="Steele R.E."/>
            <person name="Finnerty J.R."/>
            <person name="Technau U."/>
            <person name="Martindale M.Q."/>
            <person name="Rokhsar D.S."/>
        </authorList>
    </citation>
    <scope>NUCLEOTIDE SEQUENCE [LARGE SCALE GENOMIC DNA]</scope>
    <source>
        <strain>CH2 X CH6</strain>
    </source>
</reference>
<reference key="3">
    <citation type="journal article" date="2008" name="J. Mol. Biol.">
        <title>Intron retention as a posttranscriptional regulatory mechanism of neurotoxin expression at early life stages of the starlet anemone Nematostella vectensis.</title>
        <authorList>
            <person name="Moran Y."/>
            <person name="Weinberger H."/>
            <person name="Reitzel A.M."/>
            <person name="Sullivan J.C."/>
            <person name="Kahn R."/>
            <person name="Gordon D."/>
            <person name="Finnerty J.R."/>
            <person name="Gurevitz M."/>
        </authorList>
    </citation>
    <scope>FUNCTION</scope>
    <scope>ALTERNATIVE SPLICING</scope>
    <scope>DEVELOPMENTAL STAGE</scope>
    <scope>TOXIC DOSE</scope>
    <source>
        <strain>Sippewissett Marsh</strain>
    </source>
</reference>
<reference key="4">
    <citation type="journal article" date="2012" name="Proc. R. Soc. B">
        <title>Neurotoxin localization to ectodermal gland cells uncovers an alternative mechanism of venom delivery in sea anemones.</title>
        <authorList>
            <person name="Moran Y."/>
            <person name="Genikhovich G."/>
            <person name="Gordon D."/>
            <person name="Wienkoop S."/>
            <person name="Zenkert C."/>
            <person name="Ozbek S."/>
            <person name="Technau U."/>
            <person name="Gurevitz M."/>
        </authorList>
    </citation>
    <scope>FUNCTION</scope>
    <scope>TISSUE SPECIFICITY</scope>
    <scope>DEVELOPMENTAL STAGE</scope>
</reference>
<reference key="5">
    <citation type="journal article" date="2018" name="Elife">
        <title>Dynamics of venom composition across a complex life cycle.</title>
        <authorList>
            <person name="Columbus-Shenkar Y.Y."/>
            <person name="Sachkova M.Y."/>
            <person name="Macrander J."/>
            <person name="Fridrich A."/>
            <person name="Modepalli V."/>
            <person name="Reitzel A.M."/>
            <person name="Sunagar K."/>
            <person name="Moran Y."/>
        </authorList>
    </citation>
    <scope>FUNCTION</scope>
    <scope>DEVELOPMENTAL STAGE</scope>
</reference>
<reference key="6">
    <citation type="journal article" date="2019" name="Mol. Biol. Evol.">
        <title>The birth and death of toxins with distinct functions: a case study in the sea anemone Nematostella.</title>
        <authorList>
            <person name="Sachkova M.Y."/>
            <person name="Singer S.A."/>
            <person name="Macrander J."/>
            <person name="Reitzel A.M."/>
            <person name="Peigneur S."/>
            <person name="Tytgat J."/>
            <person name="Moran Y."/>
        </authorList>
    </citation>
    <scope>FUNCTION</scope>
    <scope>IDENTIFICATION BY MASS SPECTROMETRY</scope>
    <scope>DEVELOPMENTAL STAGE</scope>
</reference>
<sequence length="85" mass="9334">MASFKIVIVCLALLVAVACARRRDMMSDDELDYHYSKRGIPCACDSDGPDIRSASLSGIVWMGSCPSGWKKCKSYYSIVADCCNQ</sequence>
<keyword id="KW-0025">Alternative splicing</keyword>
<keyword id="KW-0165">Cleavage on pair of basic residues</keyword>
<keyword id="KW-1015">Disulfide bond</keyword>
<keyword id="KW-0872">Ion channel impairing toxin</keyword>
<keyword id="KW-0528">Neurotoxin</keyword>
<keyword id="KW-1185">Reference proteome</keyword>
<keyword id="KW-0964">Secreted</keyword>
<keyword id="KW-0732">Signal</keyword>
<keyword id="KW-0800">Toxin</keyword>
<keyword id="KW-0738">Voltage-gated sodium channel impairing toxin</keyword>
<accession>B1NWS8</accession>
<accession>A7SCE1</accession>
<accession>B1NWS3</accession>
<protein>
    <recommendedName>
        <fullName evidence="8">N.vectensis toxin 1 6</fullName>
        <shortName evidence="8">Nv1</shortName>
    </recommendedName>
    <alternativeName>
        <fullName evidence="7">Neurotoxin Nv1-116.40.1</fullName>
    </alternativeName>
    <alternativeName>
        <fullName evidence="12">Neurotoxin Nv1-14</fullName>
    </alternativeName>
    <alternativeName>
        <fullName evidence="11">Neurotoxin Nv1-9</fullName>
    </alternativeName>
</protein>